<feature type="chain" id="PRO_1000043047" description="Anthranilate phosphoribosyltransferase">
    <location>
        <begin position="1"/>
        <end position="349"/>
    </location>
</feature>
<feature type="binding site" evidence="1">
    <location>
        <position position="82"/>
    </location>
    <ligand>
        <name>5-phospho-alpha-D-ribose 1-diphosphate</name>
        <dbReference type="ChEBI" id="CHEBI:58017"/>
    </ligand>
</feature>
<feature type="binding site" evidence="1">
    <location>
        <position position="82"/>
    </location>
    <ligand>
        <name>anthranilate</name>
        <dbReference type="ChEBI" id="CHEBI:16567"/>
        <label>1</label>
    </ligand>
</feature>
<feature type="binding site" evidence="1">
    <location>
        <begin position="85"/>
        <end position="86"/>
    </location>
    <ligand>
        <name>5-phospho-alpha-D-ribose 1-diphosphate</name>
        <dbReference type="ChEBI" id="CHEBI:58017"/>
    </ligand>
</feature>
<feature type="binding site" evidence="1">
    <location>
        <begin position="92"/>
        <end position="95"/>
    </location>
    <ligand>
        <name>5-phospho-alpha-D-ribose 1-diphosphate</name>
        <dbReference type="ChEBI" id="CHEBI:58017"/>
    </ligand>
</feature>
<feature type="binding site" evidence="1">
    <location>
        <position position="94"/>
    </location>
    <ligand>
        <name>Mg(2+)</name>
        <dbReference type="ChEBI" id="CHEBI:18420"/>
        <label>1</label>
    </ligand>
</feature>
<feature type="binding site" evidence="1">
    <location>
        <begin position="110"/>
        <end position="118"/>
    </location>
    <ligand>
        <name>5-phospho-alpha-D-ribose 1-diphosphate</name>
        <dbReference type="ChEBI" id="CHEBI:58017"/>
    </ligand>
</feature>
<feature type="binding site" evidence="1">
    <location>
        <position position="113"/>
    </location>
    <ligand>
        <name>anthranilate</name>
        <dbReference type="ChEBI" id="CHEBI:16567"/>
        <label>1</label>
    </ligand>
</feature>
<feature type="binding site" evidence="1">
    <location>
        <position position="122"/>
    </location>
    <ligand>
        <name>5-phospho-alpha-D-ribose 1-diphosphate</name>
        <dbReference type="ChEBI" id="CHEBI:58017"/>
    </ligand>
</feature>
<feature type="binding site" evidence="1">
    <location>
        <position position="168"/>
    </location>
    <ligand>
        <name>anthranilate</name>
        <dbReference type="ChEBI" id="CHEBI:16567"/>
        <label>2</label>
    </ligand>
</feature>
<feature type="binding site" evidence="1">
    <location>
        <position position="227"/>
    </location>
    <ligand>
        <name>Mg(2+)</name>
        <dbReference type="ChEBI" id="CHEBI:18420"/>
        <label>2</label>
    </ligand>
</feature>
<feature type="binding site" evidence="1">
    <location>
        <position position="228"/>
    </location>
    <ligand>
        <name>Mg(2+)</name>
        <dbReference type="ChEBI" id="CHEBI:18420"/>
        <label>1</label>
    </ligand>
</feature>
<feature type="binding site" evidence="1">
    <location>
        <position position="228"/>
    </location>
    <ligand>
        <name>Mg(2+)</name>
        <dbReference type="ChEBI" id="CHEBI:18420"/>
        <label>2</label>
    </ligand>
</feature>
<reference key="1">
    <citation type="submission" date="2007-06" db="EMBL/GenBank/DDBJ databases">
        <authorList>
            <person name="Dodson R.J."/>
            <person name="Harkins D."/>
            <person name="Paulsen I.T."/>
        </authorList>
    </citation>
    <scope>NUCLEOTIDE SEQUENCE [LARGE SCALE GENOMIC DNA]</scope>
    <source>
        <strain>DSM 24068 / PA7</strain>
    </source>
</reference>
<accession>A6UZF1</accession>
<comment type="function">
    <text evidence="1">Catalyzes the transfer of the phosphoribosyl group of 5-phosphorylribose-1-pyrophosphate (PRPP) to anthranilate to yield N-(5'-phosphoribosyl)-anthranilate (PRA).</text>
</comment>
<comment type="catalytic activity">
    <reaction evidence="1">
        <text>N-(5-phospho-beta-D-ribosyl)anthranilate + diphosphate = 5-phospho-alpha-D-ribose 1-diphosphate + anthranilate</text>
        <dbReference type="Rhea" id="RHEA:11768"/>
        <dbReference type="ChEBI" id="CHEBI:16567"/>
        <dbReference type="ChEBI" id="CHEBI:18277"/>
        <dbReference type="ChEBI" id="CHEBI:33019"/>
        <dbReference type="ChEBI" id="CHEBI:58017"/>
        <dbReference type="EC" id="2.4.2.18"/>
    </reaction>
</comment>
<comment type="cofactor">
    <cofactor evidence="1">
        <name>Mg(2+)</name>
        <dbReference type="ChEBI" id="CHEBI:18420"/>
    </cofactor>
    <text evidence="1">Binds 2 magnesium ions per monomer.</text>
</comment>
<comment type="pathway">
    <text evidence="1">Amino-acid biosynthesis; L-tryptophan biosynthesis; L-tryptophan from chorismate: step 2/5.</text>
</comment>
<comment type="subunit">
    <text evidence="1">Homodimer.</text>
</comment>
<comment type="similarity">
    <text evidence="1">Belongs to the anthranilate phosphoribosyltransferase family.</text>
</comment>
<organism>
    <name type="scientific">Pseudomonas paraeruginosa (strain DSM 24068 / PA7)</name>
    <name type="common">Pseudomonas aeruginosa (strain PA7)</name>
    <dbReference type="NCBI Taxonomy" id="381754"/>
    <lineage>
        <taxon>Bacteria</taxon>
        <taxon>Pseudomonadati</taxon>
        <taxon>Pseudomonadota</taxon>
        <taxon>Gammaproteobacteria</taxon>
        <taxon>Pseudomonadales</taxon>
        <taxon>Pseudomonadaceae</taxon>
        <taxon>Pseudomonas</taxon>
        <taxon>Pseudomonas paraeruginosa</taxon>
    </lineage>
</organism>
<evidence type="ECO:0000255" key="1">
    <source>
        <dbReference type="HAMAP-Rule" id="MF_00211"/>
    </source>
</evidence>
<name>TRPD_PSEP7</name>
<keyword id="KW-0028">Amino-acid biosynthesis</keyword>
<keyword id="KW-0057">Aromatic amino acid biosynthesis</keyword>
<keyword id="KW-0328">Glycosyltransferase</keyword>
<keyword id="KW-0460">Magnesium</keyword>
<keyword id="KW-0479">Metal-binding</keyword>
<keyword id="KW-0808">Transferase</keyword>
<keyword id="KW-0822">Tryptophan biosynthesis</keyword>
<proteinExistence type="inferred from homology"/>
<dbReference type="EC" id="2.4.2.18" evidence="1"/>
<dbReference type="EMBL" id="CP000744">
    <property type="protein sequence ID" value="ABR82953.1"/>
    <property type="molecule type" value="Genomic_DNA"/>
</dbReference>
<dbReference type="RefSeq" id="WP_012074210.1">
    <property type="nucleotide sequence ID" value="NC_009656.1"/>
</dbReference>
<dbReference type="SMR" id="A6UZF1"/>
<dbReference type="GeneID" id="77219153"/>
<dbReference type="KEGG" id="pap:PSPA7_0791"/>
<dbReference type="HOGENOM" id="CLU_034315_2_1_6"/>
<dbReference type="UniPathway" id="UPA00035">
    <property type="reaction ID" value="UER00041"/>
</dbReference>
<dbReference type="Proteomes" id="UP000001582">
    <property type="component" value="Chromosome"/>
</dbReference>
<dbReference type="GO" id="GO:0005829">
    <property type="term" value="C:cytosol"/>
    <property type="evidence" value="ECO:0007669"/>
    <property type="project" value="TreeGrafter"/>
</dbReference>
<dbReference type="GO" id="GO:0004048">
    <property type="term" value="F:anthranilate phosphoribosyltransferase activity"/>
    <property type="evidence" value="ECO:0007669"/>
    <property type="project" value="UniProtKB-UniRule"/>
</dbReference>
<dbReference type="GO" id="GO:0000287">
    <property type="term" value="F:magnesium ion binding"/>
    <property type="evidence" value="ECO:0007669"/>
    <property type="project" value="UniProtKB-UniRule"/>
</dbReference>
<dbReference type="GO" id="GO:0000162">
    <property type="term" value="P:L-tryptophan biosynthetic process"/>
    <property type="evidence" value="ECO:0007669"/>
    <property type="project" value="UniProtKB-UniRule"/>
</dbReference>
<dbReference type="FunFam" id="1.20.970.10:FF:000006">
    <property type="entry name" value="Anthranilate phosphoribosyltransferase"/>
    <property type="match status" value="1"/>
</dbReference>
<dbReference type="FunFam" id="3.40.1030.10:FF:000002">
    <property type="entry name" value="Anthranilate phosphoribosyltransferase"/>
    <property type="match status" value="1"/>
</dbReference>
<dbReference type="Gene3D" id="3.40.1030.10">
    <property type="entry name" value="Nucleoside phosphorylase/phosphoribosyltransferase catalytic domain"/>
    <property type="match status" value="1"/>
</dbReference>
<dbReference type="Gene3D" id="1.20.970.10">
    <property type="entry name" value="Transferase, Pyrimidine Nucleoside Phosphorylase, Chain C"/>
    <property type="match status" value="1"/>
</dbReference>
<dbReference type="HAMAP" id="MF_00211">
    <property type="entry name" value="TrpD"/>
    <property type="match status" value="1"/>
</dbReference>
<dbReference type="InterPro" id="IPR005940">
    <property type="entry name" value="Anthranilate_Pribosyl_Tfrase"/>
</dbReference>
<dbReference type="InterPro" id="IPR000312">
    <property type="entry name" value="Glycosyl_Trfase_fam3"/>
</dbReference>
<dbReference type="InterPro" id="IPR017459">
    <property type="entry name" value="Glycosyl_Trfase_fam3_N_dom"/>
</dbReference>
<dbReference type="InterPro" id="IPR036320">
    <property type="entry name" value="Glycosyl_Trfase_fam3_N_dom_sf"/>
</dbReference>
<dbReference type="InterPro" id="IPR035902">
    <property type="entry name" value="Nuc_phospho_transferase"/>
</dbReference>
<dbReference type="NCBIfam" id="TIGR01245">
    <property type="entry name" value="trpD"/>
    <property type="match status" value="1"/>
</dbReference>
<dbReference type="PANTHER" id="PTHR43285">
    <property type="entry name" value="ANTHRANILATE PHOSPHORIBOSYLTRANSFERASE"/>
    <property type="match status" value="1"/>
</dbReference>
<dbReference type="PANTHER" id="PTHR43285:SF2">
    <property type="entry name" value="ANTHRANILATE PHOSPHORIBOSYLTRANSFERASE"/>
    <property type="match status" value="1"/>
</dbReference>
<dbReference type="Pfam" id="PF02885">
    <property type="entry name" value="Glycos_trans_3N"/>
    <property type="match status" value="1"/>
</dbReference>
<dbReference type="Pfam" id="PF00591">
    <property type="entry name" value="Glycos_transf_3"/>
    <property type="match status" value="1"/>
</dbReference>
<dbReference type="SUPFAM" id="SSF52418">
    <property type="entry name" value="Nucleoside phosphorylase/phosphoribosyltransferase catalytic domain"/>
    <property type="match status" value="1"/>
</dbReference>
<dbReference type="SUPFAM" id="SSF47648">
    <property type="entry name" value="Nucleoside phosphorylase/phosphoribosyltransferase N-terminal domain"/>
    <property type="match status" value="1"/>
</dbReference>
<protein>
    <recommendedName>
        <fullName evidence="1">Anthranilate phosphoribosyltransferase</fullName>
        <ecNumber evidence="1">2.4.2.18</ecNumber>
    </recommendedName>
</protein>
<sequence length="349" mass="37412">MDIKGALNRIVNQLDLTTEEMQAVMRQIMTGRCTDAQIGAFLMGMRMKSETIDEIVGAVAVMRELADGVQLPTLKHVVDVVGTGGDGANIFNVSSAASFVVAAAGGKVAKHGNRAVSGKSGSADLLEAAGIYLELTSEQVARCIDTVGVGFMFAQVHHKAMKYAAGPRRELGLRTLFNMLGPLTNPAGVRHQVVGVFTQELCKPLAEVLKRLGSEHVLVVHSRDGLDEFSLAAATHIAELKDGEVREYEVRPEDFGIKSQTLMGLEVDSPQASLELIRDALGRRKTEAGQKAAELIVMNAGPALYAADLATSLHEGIQLAHDALHTGLAREKMDELVAFTAVYREENAQ</sequence>
<gene>
    <name evidence="1" type="primary">trpD</name>
    <name type="ordered locus">PSPA7_0791</name>
</gene>